<protein>
    <recommendedName>
        <fullName evidence="1">DNA-directed RNA polymerase subunit alpha</fullName>
        <shortName evidence="1">RNAP subunit alpha</shortName>
        <ecNumber evidence="1">2.7.7.6</ecNumber>
    </recommendedName>
    <alternativeName>
        <fullName evidence="1">RNA polymerase subunit alpha</fullName>
    </alternativeName>
    <alternativeName>
        <fullName evidence="1">Transcriptase subunit alpha</fullName>
    </alternativeName>
</protein>
<name>RPOA_NITWN</name>
<gene>
    <name evidence="1" type="primary">rpoA</name>
    <name type="ordered locus">Nwi_1388</name>
</gene>
<sequence length="339" mass="37517">MTIQKNWQELIRPNKLQVVPGSDPSRFATLIAEPLERGFGQTLGNALRRILLSSLQGAAVQSVHIDGVLHEFSSIAGVREDVTDIVLNIKDIAIRMQGEGPKRMVVKKQGPGTVTAGDIQTVGDVVVLNPDLQICTLDDGAEIRMEFTVASGKGYVAAERNRPEDAPIGLIPVDSLYSPVRKVSYKVENTREGQILDYDKLTMTIETNGGVTPEDAVAFAARILQDQLNVFVNFEEPRKEVTTEIIPDLAFNPAFLKKVDELELSVRSANCLKNDNIVYIGDLVQKSEAEMLRTPNFGRKSLNEIKEVLAQMGLHLGMEVPGWPPENIDELAKRFEDHY</sequence>
<reference key="1">
    <citation type="journal article" date="2006" name="Appl. Environ. Microbiol.">
        <title>Genome sequence of the chemolithoautotrophic nitrite-oxidizing bacterium Nitrobacter winogradskyi Nb-255.</title>
        <authorList>
            <person name="Starkenburg S.R."/>
            <person name="Chain P.S.G."/>
            <person name="Sayavedra-Soto L.A."/>
            <person name="Hauser L."/>
            <person name="Land M.L."/>
            <person name="Larimer F.W."/>
            <person name="Malfatti S.A."/>
            <person name="Klotz M.G."/>
            <person name="Bottomley P.J."/>
            <person name="Arp D.J."/>
            <person name="Hickey W.J."/>
        </authorList>
    </citation>
    <scope>NUCLEOTIDE SEQUENCE [LARGE SCALE GENOMIC DNA]</scope>
    <source>
        <strain>ATCC 25391 / DSM 10237 / CIP 104748 / NCIMB 11846 / Nb-255</strain>
    </source>
</reference>
<comment type="function">
    <text evidence="1">DNA-dependent RNA polymerase catalyzes the transcription of DNA into RNA using the four ribonucleoside triphosphates as substrates.</text>
</comment>
<comment type="catalytic activity">
    <reaction evidence="1">
        <text>RNA(n) + a ribonucleoside 5'-triphosphate = RNA(n+1) + diphosphate</text>
        <dbReference type="Rhea" id="RHEA:21248"/>
        <dbReference type="Rhea" id="RHEA-COMP:14527"/>
        <dbReference type="Rhea" id="RHEA-COMP:17342"/>
        <dbReference type="ChEBI" id="CHEBI:33019"/>
        <dbReference type="ChEBI" id="CHEBI:61557"/>
        <dbReference type="ChEBI" id="CHEBI:140395"/>
        <dbReference type="EC" id="2.7.7.6"/>
    </reaction>
</comment>
<comment type="subunit">
    <text evidence="1">Homodimer. The RNAP catalytic core consists of 2 alpha, 1 beta, 1 beta' and 1 omega subunit. When a sigma factor is associated with the core the holoenzyme is formed, which can initiate transcription.</text>
</comment>
<comment type="domain">
    <text evidence="1">The N-terminal domain is essential for RNAP assembly and basal transcription, whereas the C-terminal domain is involved in interaction with transcriptional regulators and with upstream promoter elements.</text>
</comment>
<comment type="similarity">
    <text evidence="1">Belongs to the RNA polymerase alpha chain family.</text>
</comment>
<organism>
    <name type="scientific">Nitrobacter winogradskyi (strain ATCC 25391 / DSM 10237 / CIP 104748 / NCIMB 11846 / Nb-255)</name>
    <dbReference type="NCBI Taxonomy" id="323098"/>
    <lineage>
        <taxon>Bacteria</taxon>
        <taxon>Pseudomonadati</taxon>
        <taxon>Pseudomonadota</taxon>
        <taxon>Alphaproteobacteria</taxon>
        <taxon>Hyphomicrobiales</taxon>
        <taxon>Nitrobacteraceae</taxon>
        <taxon>Nitrobacter</taxon>
    </lineage>
</organism>
<keyword id="KW-0240">DNA-directed RNA polymerase</keyword>
<keyword id="KW-0548">Nucleotidyltransferase</keyword>
<keyword id="KW-1185">Reference proteome</keyword>
<keyword id="KW-0804">Transcription</keyword>
<keyword id="KW-0808">Transferase</keyword>
<accession>Q3SSU2</accession>
<feature type="chain" id="PRO_0000225284" description="DNA-directed RNA polymerase subunit alpha">
    <location>
        <begin position="1"/>
        <end position="339"/>
    </location>
</feature>
<feature type="region of interest" description="Alpha N-terminal domain (alpha-NTD)" evidence="1">
    <location>
        <begin position="1"/>
        <end position="235"/>
    </location>
</feature>
<feature type="region of interest" description="Alpha C-terminal domain (alpha-CTD)" evidence="1">
    <location>
        <begin position="251"/>
        <end position="339"/>
    </location>
</feature>
<evidence type="ECO:0000255" key="1">
    <source>
        <dbReference type="HAMAP-Rule" id="MF_00059"/>
    </source>
</evidence>
<dbReference type="EC" id="2.7.7.6" evidence="1"/>
<dbReference type="EMBL" id="CP000115">
    <property type="protein sequence ID" value="ABA04649.1"/>
    <property type="molecule type" value="Genomic_DNA"/>
</dbReference>
<dbReference type="SMR" id="Q3SSU2"/>
<dbReference type="STRING" id="323098.Nwi_1388"/>
<dbReference type="KEGG" id="nwi:Nwi_1388"/>
<dbReference type="eggNOG" id="COG0202">
    <property type="taxonomic scope" value="Bacteria"/>
</dbReference>
<dbReference type="HOGENOM" id="CLU_053084_0_0_5"/>
<dbReference type="Proteomes" id="UP000002531">
    <property type="component" value="Chromosome"/>
</dbReference>
<dbReference type="GO" id="GO:0005737">
    <property type="term" value="C:cytoplasm"/>
    <property type="evidence" value="ECO:0007669"/>
    <property type="project" value="UniProtKB-ARBA"/>
</dbReference>
<dbReference type="GO" id="GO:0000428">
    <property type="term" value="C:DNA-directed RNA polymerase complex"/>
    <property type="evidence" value="ECO:0007669"/>
    <property type="project" value="UniProtKB-KW"/>
</dbReference>
<dbReference type="GO" id="GO:0003677">
    <property type="term" value="F:DNA binding"/>
    <property type="evidence" value="ECO:0007669"/>
    <property type="project" value="UniProtKB-UniRule"/>
</dbReference>
<dbReference type="GO" id="GO:0003899">
    <property type="term" value="F:DNA-directed RNA polymerase activity"/>
    <property type="evidence" value="ECO:0007669"/>
    <property type="project" value="UniProtKB-UniRule"/>
</dbReference>
<dbReference type="GO" id="GO:0046983">
    <property type="term" value="F:protein dimerization activity"/>
    <property type="evidence" value="ECO:0007669"/>
    <property type="project" value="InterPro"/>
</dbReference>
<dbReference type="GO" id="GO:0006351">
    <property type="term" value="P:DNA-templated transcription"/>
    <property type="evidence" value="ECO:0007669"/>
    <property type="project" value="UniProtKB-UniRule"/>
</dbReference>
<dbReference type="CDD" id="cd06928">
    <property type="entry name" value="RNAP_alpha_NTD"/>
    <property type="match status" value="1"/>
</dbReference>
<dbReference type="FunFam" id="1.10.150.20:FF:000001">
    <property type="entry name" value="DNA-directed RNA polymerase subunit alpha"/>
    <property type="match status" value="1"/>
</dbReference>
<dbReference type="FunFam" id="2.170.120.12:FF:000001">
    <property type="entry name" value="DNA-directed RNA polymerase subunit alpha"/>
    <property type="match status" value="1"/>
</dbReference>
<dbReference type="Gene3D" id="1.10.150.20">
    <property type="entry name" value="5' to 3' exonuclease, C-terminal subdomain"/>
    <property type="match status" value="1"/>
</dbReference>
<dbReference type="Gene3D" id="2.170.120.12">
    <property type="entry name" value="DNA-directed RNA polymerase, insert domain"/>
    <property type="match status" value="1"/>
</dbReference>
<dbReference type="Gene3D" id="3.30.1360.10">
    <property type="entry name" value="RNA polymerase, RBP11-like subunit"/>
    <property type="match status" value="1"/>
</dbReference>
<dbReference type="HAMAP" id="MF_00059">
    <property type="entry name" value="RNApol_bact_RpoA"/>
    <property type="match status" value="1"/>
</dbReference>
<dbReference type="InterPro" id="IPR011262">
    <property type="entry name" value="DNA-dir_RNA_pol_insert"/>
</dbReference>
<dbReference type="InterPro" id="IPR011263">
    <property type="entry name" value="DNA-dir_RNA_pol_RpoA/D/Rpb3"/>
</dbReference>
<dbReference type="InterPro" id="IPR011773">
    <property type="entry name" value="DNA-dir_RpoA"/>
</dbReference>
<dbReference type="InterPro" id="IPR036603">
    <property type="entry name" value="RBP11-like"/>
</dbReference>
<dbReference type="InterPro" id="IPR011260">
    <property type="entry name" value="RNAP_asu_C"/>
</dbReference>
<dbReference type="InterPro" id="IPR036643">
    <property type="entry name" value="RNApol_insert_sf"/>
</dbReference>
<dbReference type="NCBIfam" id="NF003513">
    <property type="entry name" value="PRK05182.1-2"/>
    <property type="match status" value="1"/>
</dbReference>
<dbReference type="NCBIfam" id="NF003519">
    <property type="entry name" value="PRK05182.2-5"/>
    <property type="match status" value="1"/>
</dbReference>
<dbReference type="NCBIfam" id="TIGR02027">
    <property type="entry name" value="rpoA"/>
    <property type="match status" value="1"/>
</dbReference>
<dbReference type="Pfam" id="PF01000">
    <property type="entry name" value="RNA_pol_A_bac"/>
    <property type="match status" value="1"/>
</dbReference>
<dbReference type="Pfam" id="PF03118">
    <property type="entry name" value="RNA_pol_A_CTD"/>
    <property type="match status" value="1"/>
</dbReference>
<dbReference type="Pfam" id="PF01193">
    <property type="entry name" value="RNA_pol_L"/>
    <property type="match status" value="1"/>
</dbReference>
<dbReference type="SMART" id="SM00662">
    <property type="entry name" value="RPOLD"/>
    <property type="match status" value="1"/>
</dbReference>
<dbReference type="SUPFAM" id="SSF47789">
    <property type="entry name" value="C-terminal domain of RNA polymerase alpha subunit"/>
    <property type="match status" value="1"/>
</dbReference>
<dbReference type="SUPFAM" id="SSF56553">
    <property type="entry name" value="Insert subdomain of RNA polymerase alpha subunit"/>
    <property type="match status" value="1"/>
</dbReference>
<dbReference type="SUPFAM" id="SSF55257">
    <property type="entry name" value="RBP11-like subunits of RNA polymerase"/>
    <property type="match status" value="1"/>
</dbReference>
<proteinExistence type="inferred from homology"/>